<name>PANC_BURMS</name>
<sequence length="279" mass="31207">MKVISSIQELRDQLRGQNRTAFVPTMGNLHDGHLSLMRLARQHGDPVVASIFVNRLQFGPNEDFDQYPRTLQDDIEKLQKENVYVLFAPTERDMYPEPQEYRVQPPHDLGDILEGEFRPGFFTGVCTVVTKLMACVQPRVAVFGKKDYQQLMIVRRMCQQLALPVEIIAAETVRDADGLALSSRNRYLSEAERAEAPELAKTLAQVRSAVLGGERDLAAIEQRALAHLAARGWKPDYVSIRRRANLVAPSAAHIEAGEPLVVLTAAKLGATRLIDNLEI</sequence>
<dbReference type="EC" id="6.3.2.1" evidence="1"/>
<dbReference type="EMBL" id="CP000526">
    <property type="protein sequence ID" value="ABM52876.1"/>
    <property type="molecule type" value="Genomic_DNA"/>
</dbReference>
<dbReference type="RefSeq" id="WP_004192993.1">
    <property type="nucleotide sequence ID" value="NC_008785.1"/>
</dbReference>
<dbReference type="SMR" id="A1V5W8"/>
<dbReference type="GeneID" id="93059491"/>
<dbReference type="KEGG" id="bmv:BMASAVP1_A2312"/>
<dbReference type="HOGENOM" id="CLU_047148_0_0_4"/>
<dbReference type="UniPathway" id="UPA00028">
    <property type="reaction ID" value="UER00005"/>
</dbReference>
<dbReference type="GO" id="GO:0005829">
    <property type="term" value="C:cytosol"/>
    <property type="evidence" value="ECO:0007669"/>
    <property type="project" value="TreeGrafter"/>
</dbReference>
<dbReference type="GO" id="GO:0005524">
    <property type="term" value="F:ATP binding"/>
    <property type="evidence" value="ECO:0007669"/>
    <property type="project" value="UniProtKB-KW"/>
</dbReference>
<dbReference type="GO" id="GO:0004592">
    <property type="term" value="F:pantoate-beta-alanine ligase activity"/>
    <property type="evidence" value="ECO:0007669"/>
    <property type="project" value="UniProtKB-UniRule"/>
</dbReference>
<dbReference type="GO" id="GO:0015940">
    <property type="term" value="P:pantothenate biosynthetic process"/>
    <property type="evidence" value="ECO:0007669"/>
    <property type="project" value="UniProtKB-UniRule"/>
</dbReference>
<dbReference type="CDD" id="cd00560">
    <property type="entry name" value="PanC"/>
    <property type="match status" value="1"/>
</dbReference>
<dbReference type="Gene3D" id="3.40.50.620">
    <property type="entry name" value="HUPs"/>
    <property type="match status" value="1"/>
</dbReference>
<dbReference type="Gene3D" id="3.30.1300.10">
    <property type="entry name" value="Pantoate-beta-alanine ligase, C-terminal domain"/>
    <property type="match status" value="1"/>
</dbReference>
<dbReference type="HAMAP" id="MF_00158">
    <property type="entry name" value="PanC"/>
    <property type="match status" value="1"/>
</dbReference>
<dbReference type="InterPro" id="IPR004821">
    <property type="entry name" value="Cyt_trans-like"/>
</dbReference>
<dbReference type="InterPro" id="IPR003721">
    <property type="entry name" value="Pantoate_ligase"/>
</dbReference>
<dbReference type="InterPro" id="IPR042176">
    <property type="entry name" value="Pantoate_ligase_C"/>
</dbReference>
<dbReference type="InterPro" id="IPR014729">
    <property type="entry name" value="Rossmann-like_a/b/a_fold"/>
</dbReference>
<dbReference type="NCBIfam" id="TIGR00125">
    <property type="entry name" value="cyt_tran_rel"/>
    <property type="match status" value="1"/>
</dbReference>
<dbReference type="NCBIfam" id="TIGR00018">
    <property type="entry name" value="panC"/>
    <property type="match status" value="1"/>
</dbReference>
<dbReference type="PANTHER" id="PTHR21299">
    <property type="entry name" value="CYTIDYLATE KINASE/PANTOATE-BETA-ALANINE LIGASE"/>
    <property type="match status" value="1"/>
</dbReference>
<dbReference type="PANTHER" id="PTHR21299:SF1">
    <property type="entry name" value="PANTOATE--BETA-ALANINE LIGASE"/>
    <property type="match status" value="1"/>
</dbReference>
<dbReference type="Pfam" id="PF02569">
    <property type="entry name" value="Pantoate_ligase"/>
    <property type="match status" value="1"/>
</dbReference>
<dbReference type="SUPFAM" id="SSF52374">
    <property type="entry name" value="Nucleotidylyl transferase"/>
    <property type="match status" value="1"/>
</dbReference>
<organism>
    <name type="scientific">Burkholderia mallei (strain SAVP1)</name>
    <dbReference type="NCBI Taxonomy" id="320388"/>
    <lineage>
        <taxon>Bacteria</taxon>
        <taxon>Pseudomonadati</taxon>
        <taxon>Pseudomonadota</taxon>
        <taxon>Betaproteobacteria</taxon>
        <taxon>Burkholderiales</taxon>
        <taxon>Burkholderiaceae</taxon>
        <taxon>Burkholderia</taxon>
        <taxon>pseudomallei group</taxon>
    </lineage>
</organism>
<gene>
    <name evidence="1" type="primary">panC</name>
    <name type="ordered locus">BMASAVP1_A2312</name>
</gene>
<reference key="1">
    <citation type="journal article" date="2010" name="Genome Biol. Evol.">
        <title>Continuing evolution of Burkholderia mallei through genome reduction and large-scale rearrangements.</title>
        <authorList>
            <person name="Losada L."/>
            <person name="Ronning C.M."/>
            <person name="DeShazer D."/>
            <person name="Woods D."/>
            <person name="Fedorova N."/>
            <person name="Kim H.S."/>
            <person name="Shabalina S.A."/>
            <person name="Pearson T.R."/>
            <person name="Brinkac L."/>
            <person name="Tan P."/>
            <person name="Nandi T."/>
            <person name="Crabtree J."/>
            <person name="Badger J."/>
            <person name="Beckstrom-Sternberg S."/>
            <person name="Saqib M."/>
            <person name="Schutzer S.E."/>
            <person name="Keim P."/>
            <person name="Nierman W.C."/>
        </authorList>
    </citation>
    <scope>NUCLEOTIDE SEQUENCE [LARGE SCALE GENOMIC DNA]</scope>
    <source>
        <strain>SAVP1</strain>
    </source>
</reference>
<comment type="function">
    <text evidence="1">Catalyzes the condensation of pantoate with beta-alanine in an ATP-dependent reaction via a pantoyl-adenylate intermediate.</text>
</comment>
<comment type="catalytic activity">
    <reaction evidence="1">
        <text>(R)-pantoate + beta-alanine + ATP = (R)-pantothenate + AMP + diphosphate + H(+)</text>
        <dbReference type="Rhea" id="RHEA:10912"/>
        <dbReference type="ChEBI" id="CHEBI:15378"/>
        <dbReference type="ChEBI" id="CHEBI:15980"/>
        <dbReference type="ChEBI" id="CHEBI:29032"/>
        <dbReference type="ChEBI" id="CHEBI:30616"/>
        <dbReference type="ChEBI" id="CHEBI:33019"/>
        <dbReference type="ChEBI" id="CHEBI:57966"/>
        <dbReference type="ChEBI" id="CHEBI:456215"/>
        <dbReference type="EC" id="6.3.2.1"/>
    </reaction>
</comment>
<comment type="pathway">
    <text evidence="1">Cofactor biosynthesis; (R)-pantothenate biosynthesis; (R)-pantothenate from (R)-pantoate and beta-alanine: step 1/1.</text>
</comment>
<comment type="subunit">
    <text evidence="1">Homodimer.</text>
</comment>
<comment type="subcellular location">
    <subcellularLocation>
        <location evidence="1">Cytoplasm</location>
    </subcellularLocation>
</comment>
<comment type="miscellaneous">
    <text evidence="1">The reaction proceeds by a bi uni uni bi ping pong mechanism.</text>
</comment>
<comment type="similarity">
    <text evidence="1">Belongs to the pantothenate synthetase family.</text>
</comment>
<accession>A1V5W8</accession>
<evidence type="ECO:0000255" key="1">
    <source>
        <dbReference type="HAMAP-Rule" id="MF_00158"/>
    </source>
</evidence>
<feature type="chain" id="PRO_1000097039" description="Pantothenate synthetase">
    <location>
        <begin position="1"/>
        <end position="279"/>
    </location>
</feature>
<feature type="active site" description="Proton donor" evidence="1">
    <location>
        <position position="33"/>
    </location>
</feature>
<feature type="binding site" evidence="1">
    <location>
        <begin position="26"/>
        <end position="33"/>
    </location>
    <ligand>
        <name>ATP</name>
        <dbReference type="ChEBI" id="CHEBI:30616"/>
    </ligand>
</feature>
<feature type="binding site" evidence="1">
    <location>
        <position position="57"/>
    </location>
    <ligand>
        <name>(R)-pantoate</name>
        <dbReference type="ChEBI" id="CHEBI:15980"/>
    </ligand>
</feature>
<feature type="binding site" evidence="1">
    <location>
        <position position="57"/>
    </location>
    <ligand>
        <name>beta-alanine</name>
        <dbReference type="ChEBI" id="CHEBI:57966"/>
    </ligand>
</feature>
<feature type="binding site" evidence="1">
    <location>
        <begin position="144"/>
        <end position="147"/>
    </location>
    <ligand>
        <name>ATP</name>
        <dbReference type="ChEBI" id="CHEBI:30616"/>
    </ligand>
</feature>
<feature type="binding site" evidence="1">
    <location>
        <position position="150"/>
    </location>
    <ligand>
        <name>(R)-pantoate</name>
        <dbReference type="ChEBI" id="CHEBI:15980"/>
    </ligand>
</feature>
<feature type="binding site" evidence="1">
    <location>
        <position position="173"/>
    </location>
    <ligand>
        <name>ATP</name>
        <dbReference type="ChEBI" id="CHEBI:30616"/>
    </ligand>
</feature>
<feature type="binding site" evidence="1">
    <location>
        <begin position="181"/>
        <end position="184"/>
    </location>
    <ligand>
        <name>ATP</name>
        <dbReference type="ChEBI" id="CHEBI:30616"/>
    </ligand>
</feature>
<protein>
    <recommendedName>
        <fullName evidence="1">Pantothenate synthetase</fullName>
        <shortName evidence="1">PS</shortName>
        <ecNumber evidence="1">6.3.2.1</ecNumber>
    </recommendedName>
    <alternativeName>
        <fullName evidence="1">Pantoate--beta-alanine ligase</fullName>
    </alternativeName>
    <alternativeName>
        <fullName evidence="1">Pantoate-activating enzyme</fullName>
    </alternativeName>
</protein>
<keyword id="KW-0067">ATP-binding</keyword>
<keyword id="KW-0963">Cytoplasm</keyword>
<keyword id="KW-0436">Ligase</keyword>
<keyword id="KW-0547">Nucleotide-binding</keyword>
<keyword id="KW-0566">Pantothenate biosynthesis</keyword>
<proteinExistence type="inferred from homology"/>